<protein>
    <recommendedName>
        <fullName>Calcium/calmodulin-dependent protein kinase</fullName>
        <ecNumber>2.7.11.17</ecNumber>
    </recommendedName>
</protein>
<keyword id="KW-0067">ATP-binding</keyword>
<keyword id="KW-0112">Calmodulin-binding</keyword>
<keyword id="KW-0418">Kinase</keyword>
<keyword id="KW-0547">Nucleotide-binding</keyword>
<keyword id="KW-0597">Phosphoprotein</keyword>
<keyword id="KW-0723">Serine/threonine-protein kinase</keyword>
<keyword id="KW-0808">Transferase</keyword>
<feature type="chain" id="PRO_0000086088" description="Calcium/calmodulin-dependent protein kinase">
    <location>
        <begin position="1"/>
        <end position="382"/>
    </location>
</feature>
<feature type="domain" description="Protein kinase" evidence="2">
    <location>
        <begin position="23"/>
        <end position="278"/>
    </location>
</feature>
<feature type="region of interest" description="Calmodulin-binding" evidence="1">
    <location>
        <begin position="291"/>
        <end position="301"/>
    </location>
</feature>
<feature type="region of interest" description="Disordered" evidence="4">
    <location>
        <begin position="318"/>
        <end position="344"/>
    </location>
</feature>
<feature type="region of interest" description="Disordered" evidence="4">
    <location>
        <begin position="359"/>
        <end position="382"/>
    </location>
</feature>
<feature type="active site" description="Proton acceptor" evidence="2 3">
    <location>
        <position position="142"/>
    </location>
</feature>
<feature type="binding site" evidence="2">
    <location>
        <begin position="29"/>
        <end position="37"/>
    </location>
    <ligand>
        <name>ATP</name>
        <dbReference type="ChEBI" id="CHEBI:30616"/>
    </ligand>
</feature>
<feature type="binding site" evidence="2">
    <location>
        <position position="50"/>
    </location>
    <ligand>
        <name>ATP</name>
        <dbReference type="ChEBI" id="CHEBI:30616"/>
    </ligand>
</feature>
<comment type="catalytic activity">
    <reaction>
        <text>L-seryl-[protein] + ATP = O-phospho-L-seryl-[protein] + ADP + H(+)</text>
        <dbReference type="Rhea" id="RHEA:17989"/>
        <dbReference type="Rhea" id="RHEA-COMP:9863"/>
        <dbReference type="Rhea" id="RHEA-COMP:11604"/>
        <dbReference type="ChEBI" id="CHEBI:15378"/>
        <dbReference type="ChEBI" id="CHEBI:29999"/>
        <dbReference type="ChEBI" id="CHEBI:30616"/>
        <dbReference type="ChEBI" id="CHEBI:83421"/>
        <dbReference type="ChEBI" id="CHEBI:456216"/>
        <dbReference type="EC" id="2.7.11.17"/>
    </reaction>
</comment>
<comment type="catalytic activity">
    <reaction>
        <text>L-threonyl-[protein] + ATP = O-phospho-L-threonyl-[protein] + ADP + H(+)</text>
        <dbReference type="Rhea" id="RHEA:46608"/>
        <dbReference type="Rhea" id="RHEA-COMP:11060"/>
        <dbReference type="Rhea" id="RHEA-COMP:11605"/>
        <dbReference type="ChEBI" id="CHEBI:15378"/>
        <dbReference type="ChEBI" id="CHEBI:30013"/>
        <dbReference type="ChEBI" id="CHEBI:30616"/>
        <dbReference type="ChEBI" id="CHEBI:61977"/>
        <dbReference type="ChEBI" id="CHEBI:456216"/>
        <dbReference type="EC" id="2.7.11.17"/>
    </reaction>
</comment>
<comment type="similarity">
    <text evidence="5">Belongs to the protein kinase superfamily. CAMK Ser/Thr protein kinase family. CaMK subfamily.</text>
</comment>
<accession>O14408</accession>
<organism>
    <name type="scientific">Metarhizium anisopliae</name>
    <name type="common">Entomophthora anisopliae</name>
    <dbReference type="NCBI Taxonomy" id="5530"/>
    <lineage>
        <taxon>Eukaryota</taxon>
        <taxon>Fungi</taxon>
        <taxon>Dikarya</taxon>
        <taxon>Ascomycota</taxon>
        <taxon>Pezizomycotina</taxon>
        <taxon>Sordariomycetes</taxon>
        <taxon>Hypocreomycetidae</taxon>
        <taxon>Hypocreales</taxon>
        <taxon>Clavicipitaceae</taxon>
        <taxon>Metarhizium</taxon>
    </lineage>
</organism>
<evidence type="ECO:0000250" key="1"/>
<evidence type="ECO:0000255" key="2">
    <source>
        <dbReference type="PROSITE-ProRule" id="PRU00159"/>
    </source>
</evidence>
<evidence type="ECO:0000255" key="3">
    <source>
        <dbReference type="PROSITE-ProRule" id="PRU10027"/>
    </source>
</evidence>
<evidence type="ECO:0000256" key="4">
    <source>
        <dbReference type="SAM" id="MobiDB-lite"/>
    </source>
</evidence>
<evidence type="ECO:0000305" key="5"/>
<name>KCC1_METAN</name>
<proteinExistence type="evidence at transcript level"/>
<dbReference type="EC" id="2.7.11.17"/>
<dbReference type="EMBL" id="U28358">
    <property type="protein sequence ID" value="AAB80685.1"/>
    <property type="molecule type" value="mRNA"/>
</dbReference>
<dbReference type="SMR" id="O14408"/>
<dbReference type="VEuPathDB" id="FungiDB:MAN_03431"/>
<dbReference type="BRENDA" id="2.7.11.17">
    <property type="organism ID" value="3247"/>
</dbReference>
<dbReference type="GO" id="GO:0005524">
    <property type="term" value="F:ATP binding"/>
    <property type="evidence" value="ECO:0007669"/>
    <property type="project" value="UniProtKB-KW"/>
</dbReference>
<dbReference type="GO" id="GO:0004683">
    <property type="term" value="F:calcium/calmodulin-dependent protein kinase activity"/>
    <property type="evidence" value="ECO:0007669"/>
    <property type="project" value="UniProtKB-EC"/>
</dbReference>
<dbReference type="GO" id="GO:0005516">
    <property type="term" value="F:calmodulin binding"/>
    <property type="evidence" value="ECO:0007669"/>
    <property type="project" value="UniProtKB-KW"/>
</dbReference>
<dbReference type="GO" id="GO:0106310">
    <property type="term" value="F:protein serine kinase activity"/>
    <property type="evidence" value="ECO:0007669"/>
    <property type="project" value="RHEA"/>
</dbReference>
<dbReference type="CDD" id="cd05117">
    <property type="entry name" value="STKc_CAMK"/>
    <property type="match status" value="1"/>
</dbReference>
<dbReference type="FunFam" id="1.10.510.10:FF:000449">
    <property type="entry name" value="Calcium/calmodulin-dependent protein kinase"/>
    <property type="match status" value="1"/>
</dbReference>
<dbReference type="FunFam" id="3.30.200.20:FF:000278">
    <property type="entry name" value="Calcium/calmodulin-dependent protein kinase II"/>
    <property type="match status" value="1"/>
</dbReference>
<dbReference type="Gene3D" id="3.30.200.20">
    <property type="entry name" value="Phosphorylase Kinase, domain 1"/>
    <property type="match status" value="1"/>
</dbReference>
<dbReference type="Gene3D" id="1.10.510.10">
    <property type="entry name" value="Transferase(Phosphotransferase) domain 1"/>
    <property type="match status" value="1"/>
</dbReference>
<dbReference type="InterPro" id="IPR011009">
    <property type="entry name" value="Kinase-like_dom_sf"/>
</dbReference>
<dbReference type="InterPro" id="IPR000719">
    <property type="entry name" value="Prot_kinase_dom"/>
</dbReference>
<dbReference type="InterPro" id="IPR017441">
    <property type="entry name" value="Protein_kinase_ATP_BS"/>
</dbReference>
<dbReference type="InterPro" id="IPR008271">
    <property type="entry name" value="Ser/Thr_kinase_AS"/>
</dbReference>
<dbReference type="PANTHER" id="PTHR24347">
    <property type="entry name" value="SERINE/THREONINE-PROTEIN KINASE"/>
    <property type="match status" value="1"/>
</dbReference>
<dbReference type="Pfam" id="PF00069">
    <property type="entry name" value="Pkinase"/>
    <property type="match status" value="1"/>
</dbReference>
<dbReference type="SMART" id="SM00220">
    <property type="entry name" value="S_TKc"/>
    <property type="match status" value="1"/>
</dbReference>
<dbReference type="SUPFAM" id="SSF56112">
    <property type="entry name" value="Protein kinase-like (PK-like)"/>
    <property type="match status" value="1"/>
</dbReference>
<dbReference type="PROSITE" id="PS00107">
    <property type="entry name" value="PROTEIN_KINASE_ATP"/>
    <property type="match status" value="1"/>
</dbReference>
<dbReference type="PROSITE" id="PS50011">
    <property type="entry name" value="PROTEIN_KINASE_DOM"/>
    <property type="match status" value="1"/>
</dbReference>
<dbReference type="PROSITE" id="PS00108">
    <property type="entry name" value="PROTEIN_KINASE_ST"/>
    <property type="match status" value="1"/>
</dbReference>
<sequence length="382" mass="43532">MSFAGMLNRLHGQPESYDKKSKYKFGRTLGAGTYGVVREADGPSGKVAIKIILKKNVKGNEKMVYAELDMLQRLTHPHIVKFVDWFESRDKFYIVTQLATGGELFDRICDQGKFTEVDASQTIRQIMTAVDYLHDNDVVHRDLKPENLLYVTRDPDSDLVLADFGITKTLDIKEETLTTMAGSFGYAAPEVMEQKGHGKPVDMWSMGVITYTLLCGYSPFRSENLRDLLRECTAAPVPFHERYWKDVSQDAKDFILVLLVPEPEKRWTSKEALGHIWLSGKNATDHNLLPELEAYRRRARLRRVIEIVKLQNRIAKLKEHEEDPSESDMGDAQGASDNHKGDGSRLHALGLFAVREAKQKQESLQVEEELEKESRRRSFSNA</sequence>
<reference key="1">
    <citation type="submission" date="1995-06" db="EMBL/GenBank/DDBJ databases">
        <authorList>
            <person name="Joshi L."/>
            <person name="St Leger R.J."/>
            <person name="Bidochka M.J."/>
            <person name="Roberts D.W."/>
        </authorList>
    </citation>
    <scope>NUCLEOTIDE SEQUENCE [MRNA]</scope>
    <source>
        <strain>ME1 / ARSEF 2575</strain>
    </source>
</reference>